<proteinExistence type="evidence at transcript level"/>
<keyword id="KW-0963">Cytoplasm</keyword>
<keyword id="KW-0349">Heme</keyword>
<keyword id="KW-0408">Iron</keyword>
<keyword id="KW-0479">Metal-binding</keyword>
<keyword id="KW-0539">Nucleus</keyword>
<keyword id="KW-0560">Oxidoreductase</keyword>
<keyword id="KW-1185">Reference proteome</keyword>
<name>CYGB1_DANRE</name>
<gene>
    <name type="primary">cygb1</name>
    <name type="synonym">cygb</name>
    <name type="synonym">cygb-1</name>
    <name type="ORF">zgc:109806</name>
</gene>
<evidence type="ECO:0000250" key="1">
    <source>
        <dbReference type="UniProtKB" id="Q8WWM9"/>
    </source>
</evidence>
<evidence type="ECO:0000255" key="2">
    <source>
        <dbReference type="PROSITE-ProRule" id="PRU00238"/>
    </source>
</evidence>
<evidence type="ECO:0000269" key="3">
    <source>
    </source>
</evidence>
<evidence type="ECO:0000305" key="4"/>
<comment type="function">
    <text evidence="1">Probable multifunctional globin with a hexacoordinated heme iron required for the catalysis of various reactions depending on redox condition of the cell as well as oxygen availability. Has a nitric oxide dioxygenase (NOD) activity and is most probably involved in cell-mediated and oxygen-dependent nitric oxide consumption. Under normoxic conditions functions as a nitric oxide dioxygenase (NOD) but under hypoxic conditions the globin may switch its function to that of a nitrite (NO2) reductase (NiR), generating nitric oxide. Could also have peroxidase and superoxide dismutase activities, detoxifying reactive oxygen species and protecting cells against oxidative stress. Also binds dioxygen with low affinity and could function as an oxygen sensor but has probably no function as a respiratory oxygen carrier.</text>
</comment>
<comment type="catalytic activity">
    <reaction evidence="1">
        <text>Fe(II)-heme b-[protein] + nitric oxide + O2 = Fe(III)-heme b-[protein] + nitrate</text>
        <dbReference type="Rhea" id="RHEA:78091"/>
        <dbReference type="Rhea" id="RHEA-COMP:18975"/>
        <dbReference type="Rhea" id="RHEA-COMP:18976"/>
        <dbReference type="ChEBI" id="CHEBI:15379"/>
        <dbReference type="ChEBI" id="CHEBI:16480"/>
        <dbReference type="ChEBI" id="CHEBI:17632"/>
        <dbReference type="ChEBI" id="CHEBI:55376"/>
        <dbReference type="ChEBI" id="CHEBI:60344"/>
    </reaction>
    <physiologicalReaction direction="left-to-right" evidence="1">
        <dbReference type="Rhea" id="RHEA:78092"/>
    </physiologicalReaction>
</comment>
<comment type="catalytic activity">
    <reaction evidence="1">
        <text>Fe(III)-heme b-[protein] + nitric oxide + H2O = Fe(II)-heme b-[protein] + nitrite + 2 H(+)</text>
        <dbReference type="Rhea" id="RHEA:77711"/>
        <dbReference type="Rhea" id="RHEA-COMP:18975"/>
        <dbReference type="Rhea" id="RHEA-COMP:18976"/>
        <dbReference type="ChEBI" id="CHEBI:15377"/>
        <dbReference type="ChEBI" id="CHEBI:15378"/>
        <dbReference type="ChEBI" id="CHEBI:16301"/>
        <dbReference type="ChEBI" id="CHEBI:16480"/>
        <dbReference type="ChEBI" id="CHEBI:55376"/>
        <dbReference type="ChEBI" id="CHEBI:60344"/>
    </reaction>
    <physiologicalReaction direction="right-to-left" evidence="1">
        <dbReference type="Rhea" id="RHEA:77713"/>
    </physiologicalReaction>
</comment>
<comment type="catalytic activity">
    <reaction evidence="1">
        <text>2 superoxide + 2 H(+) = H2O2 + O2</text>
        <dbReference type="Rhea" id="RHEA:20696"/>
        <dbReference type="ChEBI" id="CHEBI:15378"/>
        <dbReference type="ChEBI" id="CHEBI:15379"/>
        <dbReference type="ChEBI" id="CHEBI:16240"/>
        <dbReference type="ChEBI" id="CHEBI:18421"/>
        <dbReference type="EC" id="1.15.1.1"/>
    </reaction>
    <physiologicalReaction direction="left-to-right" evidence="1">
        <dbReference type="Rhea" id="RHEA:20697"/>
    </physiologicalReaction>
</comment>
<comment type="catalytic activity">
    <reaction evidence="1">
        <text>H2O2 + AH2 = A + 2 H2O</text>
        <dbReference type="Rhea" id="RHEA:30275"/>
        <dbReference type="ChEBI" id="CHEBI:13193"/>
        <dbReference type="ChEBI" id="CHEBI:15377"/>
        <dbReference type="ChEBI" id="CHEBI:16240"/>
        <dbReference type="ChEBI" id="CHEBI:17499"/>
    </reaction>
    <physiologicalReaction direction="left-to-right" evidence="1">
        <dbReference type="Rhea" id="RHEA:30276"/>
    </physiologicalReaction>
</comment>
<comment type="subunit">
    <text evidence="1">Monomeric.</text>
</comment>
<comment type="subcellular location">
    <subcellularLocation>
        <location evidence="1">Cytoplasm</location>
    </subcellularLocation>
    <subcellularLocation>
        <location evidence="1">Nucleus</location>
    </subcellularLocation>
</comment>
<comment type="tissue specificity">
    <text evidence="3">Expressed in all tissues examined with highest levels in brain, eye, gut and heart.</text>
</comment>
<comment type="similarity">
    <text evidence="2">Belongs to the globin family.</text>
</comment>
<sequence>MEGDGGVQLTQSPDSLTEEDVCVIQDTWKPVYAERDNAGVAVLVRFFTNFPSAKQYFEHFRELQDPAEMQQNAQLKEHGQRVLNALNTLVENLRDADKLNTIFNQMGKSHALRHKVDPVYFKILAGVILEVLVEAFPQCFSPAEVQSSWSKLMGILYWQMNRVYAEVGWENSKK</sequence>
<feature type="chain" id="PRO_0000053387" description="Cytoglobin-1">
    <location>
        <begin position="1"/>
        <end position="174"/>
    </location>
</feature>
<feature type="domain" description="Globin" evidence="2">
    <location>
        <begin position="15"/>
        <end position="165"/>
    </location>
</feature>
<feature type="binding site" description="distal binding residue" evidence="1 2">
    <location>
        <position position="78"/>
    </location>
    <ligand>
        <name>heme b</name>
        <dbReference type="ChEBI" id="CHEBI:60344"/>
    </ligand>
    <ligandPart>
        <name>Fe</name>
        <dbReference type="ChEBI" id="CHEBI:18248"/>
    </ligandPart>
</feature>
<feature type="binding site" description="proximal binding residue" evidence="1 2">
    <location>
        <position position="110"/>
    </location>
    <ligand>
        <name>heme b</name>
        <dbReference type="ChEBI" id="CHEBI:60344"/>
    </ligand>
    <ligandPart>
        <name>Fe</name>
        <dbReference type="ChEBI" id="CHEBI:18248"/>
    </ligandPart>
</feature>
<feature type="sequence conflict" description="In Ref. 1; CAC86225." evidence="4" ref="1">
    <original>E</original>
    <variation>K</variation>
    <location>
        <position position="77"/>
    </location>
</feature>
<accession>Q8UUR3</accession>
<accession>Q504J2</accession>
<dbReference type="EC" id="1.14.12.-" evidence="1"/>
<dbReference type="EC" id="1.7.-.-" evidence="1"/>
<dbReference type="EC" id="1.11.1.-" evidence="1"/>
<dbReference type="EC" id="1.15.1.1" evidence="1"/>
<dbReference type="EMBL" id="AJ320232">
    <property type="protein sequence ID" value="CAC86225.1"/>
    <property type="molecule type" value="mRNA"/>
</dbReference>
<dbReference type="EMBL" id="BC094999">
    <property type="protein sequence ID" value="AAH94999.1"/>
    <property type="molecule type" value="mRNA"/>
</dbReference>
<dbReference type="RefSeq" id="NP_694484.1">
    <property type="nucleotide sequence ID" value="NM_152952.2"/>
</dbReference>
<dbReference type="SMR" id="Q8UUR3"/>
<dbReference type="FunCoup" id="Q8UUR3">
    <property type="interactions" value="1"/>
</dbReference>
<dbReference type="STRING" id="7955.ENSDARP00000137404"/>
<dbReference type="PaxDb" id="7955-ENSDARP00000055793"/>
<dbReference type="GeneID" id="246090"/>
<dbReference type="KEGG" id="dre:246090"/>
<dbReference type="AGR" id="ZFIN:ZDB-GENE-020513-1"/>
<dbReference type="CTD" id="246090"/>
<dbReference type="ZFIN" id="ZDB-GENE-020513-1">
    <property type="gene designation" value="cygb1"/>
</dbReference>
<dbReference type="eggNOG" id="KOG3378">
    <property type="taxonomic scope" value="Eukaryota"/>
</dbReference>
<dbReference type="InParanoid" id="Q8UUR3"/>
<dbReference type="OrthoDB" id="436496at2759"/>
<dbReference type="PhylomeDB" id="Q8UUR3"/>
<dbReference type="PRO" id="PR:Q8UUR3"/>
<dbReference type="Proteomes" id="UP000000437">
    <property type="component" value="Chromosome 3"/>
</dbReference>
<dbReference type="GO" id="GO:0005737">
    <property type="term" value="C:cytoplasm"/>
    <property type="evidence" value="ECO:0000250"/>
    <property type="project" value="UniProtKB"/>
</dbReference>
<dbReference type="GO" id="GO:0005634">
    <property type="term" value="C:nucleus"/>
    <property type="evidence" value="ECO:0000250"/>
    <property type="project" value="UniProtKB"/>
</dbReference>
<dbReference type="GO" id="GO:0020037">
    <property type="term" value="F:heme binding"/>
    <property type="evidence" value="ECO:0000318"/>
    <property type="project" value="GO_Central"/>
</dbReference>
<dbReference type="GO" id="GO:0005506">
    <property type="term" value="F:iron ion binding"/>
    <property type="evidence" value="ECO:0007669"/>
    <property type="project" value="InterPro"/>
</dbReference>
<dbReference type="GO" id="GO:0141118">
    <property type="term" value="F:nitric oxide dioxygenase activity, heme protein as donor"/>
    <property type="evidence" value="ECO:0000250"/>
    <property type="project" value="UniProtKB"/>
</dbReference>
<dbReference type="GO" id="GO:0098809">
    <property type="term" value="F:nitrite reductase activity"/>
    <property type="evidence" value="ECO:0000314"/>
    <property type="project" value="ZFIN"/>
</dbReference>
<dbReference type="GO" id="GO:0016491">
    <property type="term" value="F:oxidoreductase activity"/>
    <property type="evidence" value="ECO:0000318"/>
    <property type="project" value="GO_Central"/>
</dbReference>
<dbReference type="GO" id="GO:0019825">
    <property type="term" value="F:oxygen binding"/>
    <property type="evidence" value="ECO:0000314"/>
    <property type="project" value="ZFIN"/>
</dbReference>
<dbReference type="GO" id="GO:0004784">
    <property type="term" value="F:superoxide dismutase activity"/>
    <property type="evidence" value="ECO:0000250"/>
    <property type="project" value="UniProtKB"/>
</dbReference>
<dbReference type="GO" id="GO:0014032">
    <property type="term" value="P:neural crest cell development"/>
    <property type="evidence" value="ECO:0000315"/>
    <property type="project" value="ZFIN"/>
</dbReference>
<dbReference type="GO" id="GO:0046210">
    <property type="term" value="P:nitric oxide catabolic process"/>
    <property type="evidence" value="ECO:0000250"/>
    <property type="project" value="UniProtKB"/>
</dbReference>
<dbReference type="GO" id="GO:0015671">
    <property type="term" value="P:oxygen transport"/>
    <property type="evidence" value="ECO:0007669"/>
    <property type="project" value="InterPro"/>
</dbReference>
<dbReference type="GO" id="GO:1905292">
    <property type="term" value="P:regulation of neural crest cell differentiation"/>
    <property type="evidence" value="ECO:0000315"/>
    <property type="project" value="ZFIN"/>
</dbReference>
<dbReference type="GO" id="GO:0019430">
    <property type="term" value="P:removal of superoxide radicals"/>
    <property type="evidence" value="ECO:0000250"/>
    <property type="project" value="UniProtKB"/>
</dbReference>
<dbReference type="GO" id="GO:0046686">
    <property type="term" value="P:response to cadmium ion"/>
    <property type="evidence" value="ECO:0000270"/>
    <property type="project" value="ZFIN"/>
</dbReference>
<dbReference type="CDD" id="cd08924">
    <property type="entry name" value="Cygb"/>
    <property type="match status" value="1"/>
</dbReference>
<dbReference type="FunFam" id="1.10.490.10:FF:000005">
    <property type="entry name" value="Cytoglobin"/>
    <property type="match status" value="1"/>
</dbReference>
<dbReference type="Gene3D" id="1.10.490.10">
    <property type="entry name" value="Globins"/>
    <property type="match status" value="1"/>
</dbReference>
<dbReference type="InterPro" id="IPR000971">
    <property type="entry name" value="Globin"/>
</dbReference>
<dbReference type="InterPro" id="IPR009050">
    <property type="entry name" value="Globin-like_sf"/>
</dbReference>
<dbReference type="InterPro" id="IPR012292">
    <property type="entry name" value="Globin/Proto"/>
</dbReference>
<dbReference type="InterPro" id="IPR013314">
    <property type="entry name" value="Globin_lamprey/hagfish"/>
</dbReference>
<dbReference type="PANTHER" id="PTHR46783">
    <property type="entry name" value="CYTOGLOBIN"/>
    <property type="match status" value="1"/>
</dbReference>
<dbReference type="PANTHER" id="PTHR46783:SF1">
    <property type="entry name" value="CYTOGLOBIN-1-RELATED"/>
    <property type="match status" value="1"/>
</dbReference>
<dbReference type="Pfam" id="PF00042">
    <property type="entry name" value="Globin"/>
    <property type="match status" value="1"/>
</dbReference>
<dbReference type="PRINTS" id="PR01906">
    <property type="entry name" value="FISHGLOBIN"/>
</dbReference>
<dbReference type="SUPFAM" id="SSF46458">
    <property type="entry name" value="Globin-like"/>
    <property type="match status" value="1"/>
</dbReference>
<dbReference type="PROSITE" id="PS01033">
    <property type="entry name" value="GLOBIN"/>
    <property type="match status" value="1"/>
</dbReference>
<protein>
    <recommendedName>
        <fullName>Cytoglobin-1</fullName>
    </recommendedName>
    <alternativeName>
        <fullName>Nitric oxygen dioxygenase CYGB</fullName>
        <ecNumber evidence="1">1.14.12.-</ecNumber>
    </alternativeName>
    <alternativeName>
        <fullName>Nitrite reductase CYGB</fullName>
        <ecNumber evidence="1">1.7.-.-</ecNumber>
    </alternativeName>
    <alternativeName>
        <fullName>Pseudoperoxidase CYGB</fullName>
        <ecNumber evidence="1">1.11.1.-</ecNumber>
    </alternativeName>
    <alternativeName>
        <fullName>Superoxide dismutase CYGB</fullName>
        <ecNumber evidence="1">1.15.1.1</ecNumber>
    </alternativeName>
</protein>
<organism>
    <name type="scientific">Danio rerio</name>
    <name type="common">Zebrafish</name>
    <name type="synonym">Brachydanio rerio</name>
    <dbReference type="NCBI Taxonomy" id="7955"/>
    <lineage>
        <taxon>Eukaryota</taxon>
        <taxon>Metazoa</taxon>
        <taxon>Chordata</taxon>
        <taxon>Craniata</taxon>
        <taxon>Vertebrata</taxon>
        <taxon>Euteleostomi</taxon>
        <taxon>Actinopterygii</taxon>
        <taxon>Neopterygii</taxon>
        <taxon>Teleostei</taxon>
        <taxon>Ostariophysi</taxon>
        <taxon>Cypriniformes</taxon>
        <taxon>Danionidae</taxon>
        <taxon>Danioninae</taxon>
        <taxon>Danio</taxon>
    </lineage>
</organism>
<reference key="1">
    <citation type="journal article" date="2002" name="Mol. Biol. Evol.">
        <title>Cytoglobin: a novel globin type ubiquitously expressed in vertebrate tissues.</title>
        <authorList>
            <person name="Burmester T."/>
            <person name="Ebner B."/>
            <person name="Weich B."/>
            <person name="Hankeln T."/>
        </authorList>
    </citation>
    <scope>NUCLEOTIDE SEQUENCE [MRNA]</scope>
</reference>
<reference key="2">
    <citation type="submission" date="2005-05" db="EMBL/GenBank/DDBJ databases">
        <authorList>
            <consortium name="NIH - Zebrafish Gene Collection (ZGC) project"/>
        </authorList>
    </citation>
    <scope>NUCLEOTIDE SEQUENCE [LARGE SCALE MRNA]</scope>
    <source>
        <tissue>Larva</tissue>
    </source>
</reference>
<reference key="3">
    <citation type="journal article" date="2005" name="Biochem. Biophys. Res. Commun.">
        <title>Duplicated cytoglobin genes in teleost fishes.</title>
        <authorList>
            <person name="Fuchs C."/>
            <person name="Luckhardt A."/>
            <person name="Gerlach F."/>
            <person name="Burmester T."/>
            <person name="Hankeln T."/>
        </authorList>
    </citation>
    <scope>TISSUE SPECIFICITY</scope>
</reference>